<protein>
    <recommendedName>
        <fullName evidence="1">ATP synthase subunit beta, chloroplastic</fullName>
        <ecNumber evidence="1">7.1.2.2</ecNumber>
    </recommendedName>
    <alternativeName>
        <fullName evidence="1">ATP synthase F1 sector subunit beta</fullName>
    </alternativeName>
    <alternativeName>
        <fullName evidence="1">F-ATPase subunit beta</fullName>
    </alternativeName>
</protein>
<evidence type="ECO:0000255" key="1">
    <source>
        <dbReference type="HAMAP-Rule" id="MF_01347"/>
    </source>
</evidence>
<reference key="1">
    <citation type="submission" date="2000-01" db="EMBL/GenBank/DDBJ databases">
        <authorList>
            <person name="Wolf P.G."/>
            <person name="Su P.-H."/>
        </authorList>
    </citation>
    <scope>NUCLEOTIDE SEQUENCE [GENOMIC DNA]</scope>
    <scope>SEQUENCE REVISION TO N-TERMINUS AND 238</scope>
</reference>
<reference key="2">
    <citation type="journal article" date="1997" name="Am. J. Bot.">
        <title>Evaluation of atpB nucleotide sequences for phylogenetic studies of ferns and other pteridophytes.</title>
        <authorList>
            <person name="Wolf P.G."/>
        </authorList>
    </citation>
    <scope>NUCLEOTIDE SEQUENCE [GENOMIC DNA] OF 101-372</scope>
    <source>
        <tissue>Frond</tissue>
    </source>
</reference>
<dbReference type="EC" id="7.1.2.2" evidence="1"/>
<dbReference type="EMBL" id="U93838">
    <property type="protein sequence ID" value="AAB51746.2"/>
    <property type="molecule type" value="Genomic_DNA"/>
</dbReference>
<dbReference type="SMR" id="O03066"/>
<dbReference type="GO" id="GO:0009535">
    <property type="term" value="C:chloroplast thylakoid membrane"/>
    <property type="evidence" value="ECO:0007669"/>
    <property type="project" value="UniProtKB-SubCell"/>
</dbReference>
<dbReference type="GO" id="GO:0005739">
    <property type="term" value="C:mitochondrion"/>
    <property type="evidence" value="ECO:0007669"/>
    <property type="project" value="GOC"/>
</dbReference>
<dbReference type="GO" id="GO:0045259">
    <property type="term" value="C:proton-transporting ATP synthase complex"/>
    <property type="evidence" value="ECO:0007669"/>
    <property type="project" value="UniProtKB-KW"/>
</dbReference>
<dbReference type="GO" id="GO:0005524">
    <property type="term" value="F:ATP binding"/>
    <property type="evidence" value="ECO:0007669"/>
    <property type="project" value="UniProtKB-KW"/>
</dbReference>
<dbReference type="GO" id="GO:0046933">
    <property type="term" value="F:proton-transporting ATP synthase activity, rotational mechanism"/>
    <property type="evidence" value="ECO:0007669"/>
    <property type="project" value="InterPro"/>
</dbReference>
<dbReference type="GO" id="GO:0042776">
    <property type="term" value="P:proton motive force-driven mitochondrial ATP synthesis"/>
    <property type="evidence" value="ECO:0007669"/>
    <property type="project" value="TreeGrafter"/>
</dbReference>
<dbReference type="CDD" id="cd18110">
    <property type="entry name" value="ATP-synt_F1_beta_C"/>
    <property type="match status" value="1"/>
</dbReference>
<dbReference type="CDD" id="cd01133">
    <property type="entry name" value="F1-ATPase_beta_CD"/>
    <property type="match status" value="1"/>
</dbReference>
<dbReference type="FunFam" id="1.10.1140.10:FF:000001">
    <property type="entry name" value="ATP synthase subunit beta"/>
    <property type="match status" value="1"/>
</dbReference>
<dbReference type="FunFam" id="3.40.50.12240:FF:000006">
    <property type="entry name" value="ATP synthase subunit beta"/>
    <property type="match status" value="1"/>
</dbReference>
<dbReference type="FunFam" id="3.40.50.300:FF:000026">
    <property type="entry name" value="ATP synthase subunit beta"/>
    <property type="match status" value="1"/>
</dbReference>
<dbReference type="Gene3D" id="1.10.1140.10">
    <property type="entry name" value="Bovine Mitochondrial F1-atpase, Atp Synthase Beta Chain, Chain D, domain 3"/>
    <property type="match status" value="1"/>
</dbReference>
<dbReference type="Gene3D" id="3.40.50.300">
    <property type="entry name" value="P-loop containing nucleotide triphosphate hydrolases"/>
    <property type="match status" value="1"/>
</dbReference>
<dbReference type="HAMAP" id="MF_01347">
    <property type="entry name" value="ATP_synth_beta_bact"/>
    <property type="match status" value="1"/>
</dbReference>
<dbReference type="InterPro" id="IPR055190">
    <property type="entry name" value="ATP-synt_VA_C"/>
</dbReference>
<dbReference type="InterPro" id="IPR005722">
    <property type="entry name" value="ATP_synth_F1_bsu"/>
</dbReference>
<dbReference type="InterPro" id="IPR020003">
    <property type="entry name" value="ATPase_a/bsu_AS"/>
</dbReference>
<dbReference type="InterPro" id="IPR050053">
    <property type="entry name" value="ATPase_alpha/beta_chains"/>
</dbReference>
<dbReference type="InterPro" id="IPR000194">
    <property type="entry name" value="ATPase_F1/V1/A1_a/bsu_nucl-bd"/>
</dbReference>
<dbReference type="InterPro" id="IPR024034">
    <property type="entry name" value="ATPase_F1/V1_b/a_C"/>
</dbReference>
<dbReference type="InterPro" id="IPR027417">
    <property type="entry name" value="P-loop_NTPase"/>
</dbReference>
<dbReference type="NCBIfam" id="TIGR01039">
    <property type="entry name" value="atpD"/>
    <property type="match status" value="1"/>
</dbReference>
<dbReference type="PANTHER" id="PTHR15184">
    <property type="entry name" value="ATP SYNTHASE"/>
    <property type="match status" value="1"/>
</dbReference>
<dbReference type="PANTHER" id="PTHR15184:SF71">
    <property type="entry name" value="ATP SYNTHASE SUBUNIT BETA, MITOCHONDRIAL"/>
    <property type="match status" value="1"/>
</dbReference>
<dbReference type="Pfam" id="PF00006">
    <property type="entry name" value="ATP-synt_ab"/>
    <property type="match status" value="1"/>
</dbReference>
<dbReference type="Pfam" id="PF22919">
    <property type="entry name" value="ATP-synt_VA_C"/>
    <property type="match status" value="1"/>
</dbReference>
<dbReference type="SUPFAM" id="SSF47917">
    <property type="entry name" value="C-terminal domain of alpha and beta subunits of F1 ATP synthase"/>
    <property type="match status" value="1"/>
</dbReference>
<dbReference type="SUPFAM" id="SSF52540">
    <property type="entry name" value="P-loop containing nucleoside triphosphate hydrolases"/>
    <property type="match status" value="1"/>
</dbReference>
<dbReference type="PROSITE" id="PS00152">
    <property type="entry name" value="ATPASE_ALPHA_BETA"/>
    <property type="match status" value="1"/>
</dbReference>
<gene>
    <name evidence="1" type="primary">atpB</name>
</gene>
<proteinExistence type="inferred from homology"/>
<sequence length="395" mass="42418">PVGETTLGRISNVLGEPVDNLGPVQSSTTFPIHRSAPAFTQLDTKLSIFETGIKVVDLSAPYRRGGKIGLFGGAGVGKTVLITESINNIAKAHGGVSVSGGVGERTREGNDLYMEMKESKVINEQNISESKVALVYGQMNEPPGARMRVGSTASTMAEYFRDVNKQDVPPFIDNIFRFVQAGSEVSALLGRMPSAVGYQPTLGTEMGSLQERITSTKEGSITSIQAVYVPADDLTDPAPATTSAHLDATTVLSRGLAAKGIYPAVDPLDSTSTMLQPWIAGEEHYDTAQGVKQTLQRYKELQDIIAIPGLDELSEEDRLTVARARKIERFLSQPFFVAEVFTGSPGKYVSLSETIKGFQMILPGELDNLPEQAFYLVGNIDEATAKAASLQAEVQ</sequence>
<feature type="chain" id="PRO_0000144500" description="ATP synthase subunit beta, chloroplastic">
    <location>
        <begin position="1" status="less than"/>
        <end position="395"/>
    </location>
</feature>
<feature type="binding site" evidence="1">
    <location>
        <begin position="72"/>
        <end position="79"/>
    </location>
    <ligand>
        <name>ATP</name>
        <dbReference type="ChEBI" id="CHEBI:30616"/>
    </ligand>
</feature>
<feature type="non-terminal residue">
    <location>
        <position position="1"/>
    </location>
</feature>
<accession>O03066</accession>
<comment type="function">
    <text evidence="1">Produces ATP from ADP in the presence of a proton gradient across the membrane. The catalytic sites are hosted primarily by the beta subunits.</text>
</comment>
<comment type="catalytic activity">
    <reaction evidence="1">
        <text>ATP + H2O + 4 H(+)(in) = ADP + phosphate + 5 H(+)(out)</text>
        <dbReference type="Rhea" id="RHEA:57720"/>
        <dbReference type="ChEBI" id="CHEBI:15377"/>
        <dbReference type="ChEBI" id="CHEBI:15378"/>
        <dbReference type="ChEBI" id="CHEBI:30616"/>
        <dbReference type="ChEBI" id="CHEBI:43474"/>
        <dbReference type="ChEBI" id="CHEBI:456216"/>
        <dbReference type="EC" id="7.1.2.2"/>
    </reaction>
</comment>
<comment type="subunit">
    <text evidence="1">F-type ATPases have 2 components, CF(1) - the catalytic core - and CF(0) - the membrane proton channel. CF(1) has five subunits: alpha(3), beta(3), gamma(1), delta(1), epsilon(1). CF(0) has four main subunits: a(1), b(1), b'(1) and c(9-12).</text>
</comment>
<comment type="subcellular location">
    <subcellularLocation>
        <location evidence="1">Plastid</location>
        <location evidence="1">Chloroplast thylakoid membrane</location>
        <topology evidence="1">Peripheral membrane protein</topology>
    </subcellularLocation>
</comment>
<comment type="similarity">
    <text evidence="1">Belongs to the ATPase alpha/beta chains family.</text>
</comment>
<name>ATPB_BLEOC</name>
<keyword id="KW-0066">ATP synthesis</keyword>
<keyword id="KW-0067">ATP-binding</keyword>
<keyword id="KW-0139">CF(1)</keyword>
<keyword id="KW-0150">Chloroplast</keyword>
<keyword id="KW-0375">Hydrogen ion transport</keyword>
<keyword id="KW-0406">Ion transport</keyword>
<keyword id="KW-0472">Membrane</keyword>
<keyword id="KW-0547">Nucleotide-binding</keyword>
<keyword id="KW-0934">Plastid</keyword>
<keyword id="KW-0793">Thylakoid</keyword>
<keyword id="KW-1278">Translocase</keyword>
<keyword id="KW-0813">Transport</keyword>
<organism>
    <name type="scientific">Blechnum occidentale</name>
    <name type="common">Hammock fern</name>
    <dbReference type="NCBI Taxonomy" id="32073"/>
    <lineage>
        <taxon>Eukaryota</taxon>
        <taxon>Viridiplantae</taxon>
        <taxon>Streptophyta</taxon>
        <taxon>Embryophyta</taxon>
        <taxon>Tracheophyta</taxon>
        <taxon>Polypodiopsida</taxon>
        <taxon>Polypodiidae</taxon>
        <taxon>Polypodiales</taxon>
        <taxon>Aspleniineae</taxon>
        <taxon>Blechnaceae</taxon>
        <taxon>Blechnoideae</taxon>
        <taxon>Blechnum</taxon>
    </lineage>
</organism>
<geneLocation type="chloroplast"/>